<sequence length="720" mass="77882">MNTILMIPTGEGVGLTSACLGLIYALDCNGIKAGFLKPFSQELPNQVDRTTSLFSHLFQGKTVTSISHEKVLQRLALGERDELLEEAVSIHRNVAANYDVIIVEGLLPNAQDHFATELNAALAQALDAKVVLVSTADVQNPRRTAEKIEAHLHHFGGVSSNRTAGVLFMRTRGLPEETAQIPLTIDPSLRLNTEIAAFSQELQRYNRNLGTTTLPIIGLVPFSNTLSVPRTLDIASIIEGDWIHQGEARHRRILHSSLIASSIEYELNKFVAGELIISASERTDVLLASSLATSNGIPLAGLVLTERKAPNPQILDFCQHAIKQGLPILHTQLNTLETAQRLADFGNEIPVDDTERAEQVTRFVSSHIDTAWLNSQINTGVQPRLSPSAFRHELVQKSIAAKKRIVLPEGDEPRTVQAAAICQSRGIAHCILLAKPEAVVEVAKARGIELPDDLEIIDPDLIRNQYITPMVELRNGKLNELQAKEQLQDTVVLGTMMLALDQVDGLVSGAIHTTANTVRPAFQLIKTAPDYSLVSSVFFMLLPDEVYVYGDCAINPDPDADQLAEIAIQSADSAKAFGINPRIAMISYSTGTSGAGADVEKVAKATEIAKQRRPDLLIDGPLQYDAASVESVGRQKAPDSQVAGRANVFIFPDLNTGNTTYKAVQRSANVVSVGPMLQGLNKPVNDLSRGALVDDIVFTIALTAIQAEQQLEAKAAALAS</sequence>
<comment type="function">
    <text evidence="1">Involved in acetate metabolism.</text>
</comment>
<comment type="catalytic activity">
    <reaction>
        <text>acetyl-CoA + phosphate = acetyl phosphate + CoA</text>
        <dbReference type="Rhea" id="RHEA:19521"/>
        <dbReference type="ChEBI" id="CHEBI:22191"/>
        <dbReference type="ChEBI" id="CHEBI:43474"/>
        <dbReference type="ChEBI" id="CHEBI:57287"/>
        <dbReference type="ChEBI" id="CHEBI:57288"/>
        <dbReference type="EC" id="2.3.1.8"/>
    </reaction>
</comment>
<comment type="pathway">
    <text>Metabolic intermediate biosynthesis; acetyl-CoA biosynthesis; acetyl-CoA from acetate: step 2/2.</text>
</comment>
<comment type="subunit">
    <text evidence="1">Homohexamer.</text>
</comment>
<comment type="subcellular location">
    <subcellularLocation>
        <location evidence="2">Cytoplasm</location>
    </subcellularLocation>
</comment>
<comment type="domain">
    <text evidence="1">The N-terminal region seems to be important for proper quaternary structure. The C-terminal region contains the substrate-binding site (By similarity).</text>
</comment>
<comment type="similarity">
    <text evidence="2">In the N-terminal section; belongs to the CobB/CobQ family.</text>
</comment>
<comment type="similarity">
    <text evidence="2">In the C-terminal section; belongs to the phosphate acetyltransferase and butyryltransferase family.</text>
</comment>
<protein>
    <recommendedName>
        <fullName>Phosphate acetyltransferase</fullName>
        <ecNumber>2.3.1.8</ecNumber>
    </recommendedName>
    <alternativeName>
        <fullName>Phosphotransacetylase</fullName>
    </alternativeName>
</protein>
<proteinExistence type="inferred from homology"/>
<organism>
    <name type="scientific">Acinetobacter baylyi (strain ATCC 33305 / BD413 / ADP1)</name>
    <dbReference type="NCBI Taxonomy" id="62977"/>
    <lineage>
        <taxon>Bacteria</taxon>
        <taxon>Pseudomonadati</taxon>
        <taxon>Pseudomonadota</taxon>
        <taxon>Gammaproteobacteria</taxon>
        <taxon>Moraxellales</taxon>
        <taxon>Moraxellaceae</taxon>
        <taxon>Acinetobacter</taxon>
    </lineage>
</organism>
<keyword id="KW-0012">Acyltransferase</keyword>
<keyword id="KW-0963">Cytoplasm</keyword>
<keyword id="KW-0808">Transferase</keyword>
<dbReference type="EC" id="2.3.1.8"/>
<dbReference type="EMBL" id="CR543861">
    <property type="protein sequence ID" value="CAG67466.1"/>
    <property type="molecule type" value="Genomic_DNA"/>
</dbReference>
<dbReference type="RefSeq" id="WP_004920051.1">
    <property type="nucleotide sequence ID" value="NC_005966.1"/>
</dbReference>
<dbReference type="SMR" id="Q6FEP2"/>
<dbReference type="STRING" id="202950.GCA_001485005_00778"/>
<dbReference type="GeneID" id="45233019"/>
<dbReference type="KEGG" id="aci:ACIAD0540"/>
<dbReference type="eggNOG" id="COG0280">
    <property type="taxonomic scope" value="Bacteria"/>
</dbReference>
<dbReference type="eggNOG" id="COG0857">
    <property type="taxonomic scope" value="Bacteria"/>
</dbReference>
<dbReference type="HOGENOM" id="CLU_019723_3_0_6"/>
<dbReference type="OrthoDB" id="9808984at2"/>
<dbReference type="BioCyc" id="ASP62977:ACIAD_RS02455-MONOMER"/>
<dbReference type="UniPathway" id="UPA00340">
    <property type="reaction ID" value="UER00459"/>
</dbReference>
<dbReference type="Proteomes" id="UP000000430">
    <property type="component" value="Chromosome"/>
</dbReference>
<dbReference type="GO" id="GO:0005737">
    <property type="term" value="C:cytoplasm"/>
    <property type="evidence" value="ECO:0007669"/>
    <property type="project" value="UniProtKB-SubCell"/>
</dbReference>
<dbReference type="GO" id="GO:0008959">
    <property type="term" value="F:phosphate acetyltransferase activity"/>
    <property type="evidence" value="ECO:0007669"/>
    <property type="project" value="UniProtKB-EC"/>
</dbReference>
<dbReference type="GO" id="GO:0006085">
    <property type="term" value="P:acetyl-CoA biosynthetic process"/>
    <property type="evidence" value="ECO:0007669"/>
    <property type="project" value="UniProtKB-UniPathway"/>
</dbReference>
<dbReference type="CDD" id="cd03109">
    <property type="entry name" value="DTBS"/>
    <property type="match status" value="1"/>
</dbReference>
<dbReference type="FunFam" id="3.40.50.10750:FF:000001">
    <property type="entry name" value="Phosphate acetyltransferase"/>
    <property type="match status" value="1"/>
</dbReference>
<dbReference type="Gene3D" id="3.40.50.10950">
    <property type="match status" value="1"/>
</dbReference>
<dbReference type="Gene3D" id="3.40.1390.20">
    <property type="entry name" value="HprK N-terminal domain-like"/>
    <property type="match status" value="1"/>
</dbReference>
<dbReference type="Gene3D" id="3.40.50.10750">
    <property type="entry name" value="Isocitrate/Isopropylmalate dehydrogenase-like"/>
    <property type="match status" value="1"/>
</dbReference>
<dbReference type="Gene3D" id="3.40.50.300">
    <property type="entry name" value="P-loop containing nucleotide triphosphate hydrolases"/>
    <property type="match status" value="1"/>
</dbReference>
<dbReference type="InterPro" id="IPR010766">
    <property type="entry name" value="DRTGG"/>
</dbReference>
<dbReference type="InterPro" id="IPR016475">
    <property type="entry name" value="P-Actrans_bac"/>
</dbReference>
<dbReference type="InterPro" id="IPR027417">
    <property type="entry name" value="P-loop_NTPase"/>
</dbReference>
<dbReference type="InterPro" id="IPR004614">
    <property type="entry name" value="P_AcTrfase"/>
</dbReference>
<dbReference type="InterPro" id="IPR042113">
    <property type="entry name" value="P_AcTrfase_dom1"/>
</dbReference>
<dbReference type="InterPro" id="IPR042112">
    <property type="entry name" value="P_AcTrfase_dom2"/>
</dbReference>
<dbReference type="InterPro" id="IPR050500">
    <property type="entry name" value="Phos_Acetyltrans/Butyryltrans"/>
</dbReference>
<dbReference type="InterPro" id="IPR002505">
    <property type="entry name" value="PTA_PTB"/>
</dbReference>
<dbReference type="InterPro" id="IPR028979">
    <property type="entry name" value="Ser_kin/Pase_Hpr-like_N_sf"/>
</dbReference>
<dbReference type="NCBIfam" id="NF004167">
    <property type="entry name" value="PRK05632.1"/>
    <property type="match status" value="1"/>
</dbReference>
<dbReference type="NCBIfam" id="NF007233">
    <property type="entry name" value="PRK09653.1"/>
    <property type="match status" value="1"/>
</dbReference>
<dbReference type="NCBIfam" id="TIGR00651">
    <property type="entry name" value="pta"/>
    <property type="match status" value="1"/>
</dbReference>
<dbReference type="PANTHER" id="PTHR43356">
    <property type="entry name" value="PHOSPHATE ACETYLTRANSFERASE"/>
    <property type="match status" value="1"/>
</dbReference>
<dbReference type="PANTHER" id="PTHR43356:SF3">
    <property type="entry name" value="PHOSPHATE ACETYLTRANSFERASE"/>
    <property type="match status" value="1"/>
</dbReference>
<dbReference type="Pfam" id="PF13500">
    <property type="entry name" value="AAA_26"/>
    <property type="match status" value="1"/>
</dbReference>
<dbReference type="Pfam" id="PF07085">
    <property type="entry name" value="DRTGG"/>
    <property type="match status" value="1"/>
</dbReference>
<dbReference type="Pfam" id="PF01515">
    <property type="entry name" value="PTA_PTB"/>
    <property type="match status" value="1"/>
</dbReference>
<dbReference type="PIRSF" id="PIRSF006107">
    <property type="entry name" value="PhpActrans_proteobac"/>
    <property type="match status" value="1"/>
</dbReference>
<dbReference type="SUPFAM" id="SSF75138">
    <property type="entry name" value="HprK N-terminal domain-like"/>
    <property type="match status" value="1"/>
</dbReference>
<dbReference type="SUPFAM" id="SSF53659">
    <property type="entry name" value="Isocitrate/Isopropylmalate dehydrogenase-like"/>
    <property type="match status" value="1"/>
</dbReference>
<dbReference type="SUPFAM" id="SSF52540">
    <property type="entry name" value="P-loop containing nucleoside triphosphate hydrolases"/>
    <property type="match status" value="1"/>
</dbReference>
<name>PTA_ACIAD</name>
<accession>Q6FEP2</accession>
<gene>
    <name type="primary">pta</name>
    <name type="ordered locus">ACIAD0540</name>
</gene>
<evidence type="ECO:0000250" key="1"/>
<evidence type="ECO:0000305" key="2"/>
<reference key="1">
    <citation type="journal article" date="2004" name="Nucleic Acids Res.">
        <title>Unique features revealed by the genome sequence of Acinetobacter sp. ADP1, a versatile and naturally transformation competent bacterium.</title>
        <authorList>
            <person name="Barbe V."/>
            <person name="Vallenet D."/>
            <person name="Fonknechten N."/>
            <person name="Kreimeyer A."/>
            <person name="Oztas S."/>
            <person name="Labarre L."/>
            <person name="Cruveiller S."/>
            <person name="Robert C."/>
            <person name="Duprat S."/>
            <person name="Wincker P."/>
            <person name="Ornston L.N."/>
            <person name="Weissenbach J."/>
            <person name="Marliere P."/>
            <person name="Cohen G.N."/>
            <person name="Medigue C."/>
        </authorList>
    </citation>
    <scope>NUCLEOTIDE SEQUENCE [LARGE SCALE GENOMIC DNA]</scope>
    <source>
        <strain>ATCC 33305 / BD413 / ADP1</strain>
    </source>
</reference>
<feature type="chain" id="PRO_0000405544" description="Phosphate acetyltransferase">
    <location>
        <begin position="1"/>
        <end position="720"/>
    </location>
</feature>
<feature type="region of interest" description="Phosphate acetyltransferase">
    <location>
        <begin position="389"/>
        <end position="720"/>
    </location>
</feature>